<keyword id="KW-1003">Cell membrane</keyword>
<keyword id="KW-0472">Membrane</keyword>
<keyword id="KW-1185">Reference proteome</keyword>
<keyword id="KW-0812">Transmembrane</keyword>
<keyword id="KW-1133">Transmembrane helix</keyword>
<organism>
    <name type="scientific">Bacillus subtilis (strain 168)</name>
    <dbReference type="NCBI Taxonomy" id="224308"/>
    <lineage>
        <taxon>Bacteria</taxon>
        <taxon>Bacillati</taxon>
        <taxon>Bacillota</taxon>
        <taxon>Bacilli</taxon>
        <taxon>Bacillales</taxon>
        <taxon>Bacillaceae</taxon>
        <taxon>Bacillus</taxon>
    </lineage>
</organism>
<name>YOQO_BACSU</name>
<accession>O31923</accession>
<feature type="chain" id="PRO_0000360472" description="SPbeta prophage-derived uncharacterized protein YoqO">
    <location>
        <begin position="1"/>
        <end position="124"/>
    </location>
</feature>
<feature type="transmembrane region" description="Helical" evidence="1">
    <location>
        <begin position="54"/>
        <end position="74"/>
    </location>
</feature>
<feature type="transmembrane region" description="Helical" evidence="1">
    <location>
        <begin position="88"/>
        <end position="108"/>
    </location>
</feature>
<dbReference type="EMBL" id="AL009126">
    <property type="protein sequence ID" value="CAB13948.1"/>
    <property type="molecule type" value="Genomic_DNA"/>
</dbReference>
<dbReference type="RefSeq" id="NP_389938.1">
    <property type="nucleotide sequence ID" value="NC_000964.3"/>
</dbReference>
<dbReference type="RefSeq" id="WP_009967489.1">
    <property type="nucleotide sequence ID" value="NZ_OZ025638.1"/>
</dbReference>
<dbReference type="SMR" id="O31923"/>
<dbReference type="FunCoup" id="O31923">
    <property type="interactions" value="12"/>
</dbReference>
<dbReference type="STRING" id="224308.BSU20560"/>
<dbReference type="PaxDb" id="224308-BSU20560"/>
<dbReference type="EnsemblBacteria" id="CAB13948">
    <property type="protein sequence ID" value="CAB13948"/>
    <property type="gene ID" value="BSU_20560"/>
</dbReference>
<dbReference type="GeneID" id="936492"/>
<dbReference type="KEGG" id="bsu:BSU20560"/>
<dbReference type="PATRIC" id="fig|224308.179.peg.2246"/>
<dbReference type="InParanoid" id="O31923"/>
<dbReference type="OrthoDB" id="2942197at2"/>
<dbReference type="BioCyc" id="BSUB:BSU20560-MONOMER"/>
<dbReference type="Proteomes" id="UP000001570">
    <property type="component" value="Chromosome"/>
</dbReference>
<dbReference type="GO" id="GO:0005886">
    <property type="term" value="C:plasma membrane"/>
    <property type="evidence" value="ECO:0007669"/>
    <property type="project" value="UniProtKB-SubCell"/>
</dbReference>
<dbReference type="InterPro" id="IPR025621">
    <property type="entry name" value="YoqO"/>
</dbReference>
<dbReference type="Pfam" id="PF14037">
    <property type="entry name" value="YoqO"/>
    <property type="match status" value="1"/>
</dbReference>
<protein>
    <recommendedName>
        <fullName>SPbeta prophage-derived uncharacterized protein YoqO</fullName>
    </recommendedName>
</protein>
<gene>
    <name type="primary">yoqO</name>
    <name type="ordered locus">BSU20560</name>
</gene>
<proteinExistence type="predicted"/>
<evidence type="ECO:0000255" key="1"/>
<evidence type="ECO:0000305" key="2"/>
<reference key="1">
    <citation type="journal article" date="1997" name="Nature">
        <title>The complete genome sequence of the Gram-positive bacterium Bacillus subtilis.</title>
        <authorList>
            <person name="Kunst F."/>
            <person name="Ogasawara N."/>
            <person name="Moszer I."/>
            <person name="Albertini A.M."/>
            <person name="Alloni G."/>
            <person name="Azevedo V."/>
            <person name="Bertero M.G."/>
            <person name="Bessieres P."/>
            <person name="Bolotin A."/>
            <person name="Borchert S."/>
            <person name="Borriss R."/>
            <person name="Boursier L."/>
            <person name="Brans A."/>
            <person name="Braun M."/>
            <person name="Brignell S.C."/>
            <person name="Bron S."/>
            <person name="Brouillet S."/>
            <person name="Bruschi C.V."/>
            <person name="Caldwell B."/>
            <person name="Capuano V."/>
            <person name="Carter N.M."/>
            <person name="Choi S.-K."/>
            <person name="Codani J.-J."/>
            <person name="Connerton I.F."/>
            <person name="Cummings N.J."/>
            <person name="Daniel R.A."/>
            <person name="Denizot F."/>
            <person name="Devine K.M."/>
            <person name="Duesterhoeft A."/>
            <person name="Ehrlich S.D."/>
            <person name="Emmerson P.T."/>
            <person name="Entian K.-D."/>
            <person name="Errington J."/>
            <person name="Fabret C."/>
            <person name="Ferrari E."/>
            <person name="Foulger D."/>
            <person name="Fritz C."/>
            <person name="Fujita M."/>
            <person name="Fujita Y."/>
            <person name="Fuma S."/>
            <person name="Galizzi A."/>
            <person name="Galleron N."/>
            <person name="Ghim S.-Y."/>
            <person name="Glaser P."/>
            <person name="Goffeau A."/>
            <person name="Golightly E.J."/>
            <person name="Grandi G."/>
            <person name="Guiseppi G."/>
            <person name="Guy B.J."/>
            <person name="Haga K."/>
            <person name="Haiech J."/>
            <person name="Harwood C.R."/>
            <person name="Henaut A."/>
            <person name="Hilbert H."/>
            <person name="Holsappel S."/>
            <person name="Hosono S."/>
            <person name="Hullo M.-F."/>
            <person name="Itaya M."/>
            <person name="Jones L.-M."/>
            <person name="Joris B."/>
            <person name="Karamata D."/>
            <person name="Kasahara Y."/>
            <person name="Klaerr-Blanchard M."/>
            <person name="Klein C."/>
            <person name="Kobayashi Y."/>
            <person name="Koetter P."/>
            <person name="Koningstein G."/>
            <person name="Krogh S."/>
            <person name="Kumano M."/>
            <person name="Kurita K."/>
            <person name="Lapidus A."/>
            <person name="Lardinois S."/>
            <person name="Lauber J."/>
            <person name="Lazarevic V."/>
            <person name="Lee S.-M."/>
            <person name="Levine A."/>
            <person name="Liu H."/>
            <person name="Masuda S."/>
            <person name="Mauel C."/>
            <person name="Medigue C."/>
            <person name="Medina N."/>
            <person name="Mellado R.P."/>
            <person name="Mizuno M."/>
            <person name="Moestl D."/>
            <person name="Nakai S."/>
            <person name="Noback M."/>
            <person name="Noone D."/>
            <person name="O'Reilly M."/>
            <person name="Ogawa K."/>
            <person name="Ogiwara A."/>
            <person name="Oudega B."/>
            <person name="Park S.-H."/>
            <person name="Parro V."/>
            <person name="Pohl T.M."/>
            <person name="Portetelle D."/>
            <person name="Porwollik S."/>
            <person name="Prescott A.M."/>
            <person name="Presecan E."/>
            <person name="Pujic P."/>
            <person name="Purnelle B."/>
            <person name="Rapoport G."/>
            <person name="Rey M."/>
            <person name="Reynolds S."/>
            <person name="Rieger M."/>
            <person name="Rivolta C."/>
            <person name="Rocha E."/>
            <person name="Roche B."/>
            <person name="Rose M."/>
            <person name="Sadaie Y."/>
            <person name="Sato T."/>
            <person name="Scanlan E."/>
            <person name="Schleich S."/>
            <person name="Schroeter R."/>
            <person name="Scoffone F."/>
            <person name="Sekiguchi J."/>
            <person name="Sekowska A."/>
            <person name="Seror S.J."/>
            <person name="Serror P."/>
            <person name="Shin B.-S."/>
            <person name="Soldo B."/>
            <person name="Sorokin A."/>
            <person name="Tacconi E."/>
            <person name="Takagi T."/>
            <person name="Takahashi H."/>
            <person name="Takemaru K."/>
            <person name="Takeuchi M."/>
            <person name="Tamakoshi A."/>
            <person name="Tanaka T."/>
            <person name="Terpstra P."/>
            <person name="Tognoni A."/>
            <person name="Tosato V."/>
            <person name="Uchiyama S."/>
            <person name="Vandenbol M."/>
            <person name="Vannier F."/>
            <person name="Vassarotti A."/>
            <person name="Viari A."/>
            <person name="Wambutt R."/>
            <person name="Wedler E."/>
            <person name="Wedler H."/>
            <person name="Weitzenegger T."/>
            <person name="Winters P."/>
            <person name="Wipat A."/>
            <person name="Yamamoto H."/>
            <person name="Yamane K."/>
            <person name="Yasumoto K."/>
            <person name="Yata K."/>
            <person name="Yoshida K."/>
            <person name="Yoshikawa H.-F."/>
            <person name="Zumstein E."/>
            <person name="Yoshikawa H."/>
            <person name="Danchin A."/>
        </authorList>
    </citation>
    <scope>NUCLEOTIDE SEQUENCE [LARGE SCALE GENOMIC DNA]</scope>
    <source>
        <strain>168</strain>
    </source>
</reference>
<sequence>MSKTIGITGFFLSIVVQSFSANDSLSHKIATGLLFVSIAIYNFDHAKDYSKASLVVICLTFFVLALGIHKLLSFSSDLFDNVNINFGVIFILQITLIIGSVAIAISIMKFICDRLKKKPNGKEC</sequence>
<comment type="subcellular location">
    <subcellularLocation>
        <location evidence="2">Cell membrane</location>
        <topology evidence="2">Multi-pass membrane protein</topology>
    </subcellularLocation>
</comment>